<dbReference type="EC" id="6.1.1.14" evidence="1"/>
<dbReference type="EMBL" id="CP000961">
    <property type="protein sequence ID" value="ACA84313.1"/>
    <property type="molecule type" value="Genomic_DNA"/>
</dbReference>
<dbReference type="RefSeq" id="WP_012322662.1">
    <property type="nucleotide sequence ID" value="NC_010506.1"/>
</dbReference>
<dbReference type="SMR" id="B1KCY4"/>
<dbReference type="STRING" id="392500.Swoo_0012"/>
<dbReference type="KEGG" id="swd:Swoo_0012"/>
<dbReference type="eggNOG" id="COG0751">
    <property type="taxonomic scope" value="Bacteria"/>
</dbReference>
<dbReference type="HOGENOM" id="CLU_007220_2_2_6"/>
<dbReference type="Proteomes" id="UP000002168">
    <property type="component" value="Chromosome"/>
</dbReference>
<dbReference type="GO" id="GO:0005829">
    <property type="term" value="C:cytosol"/>
    <property type="evidence" value="ECO:0007669"/>
    <property type="project" value="TreeGrafter"/>
</dbReference>
<dbReference type="GO" id="GO:0004814">
    <property type="term" value="F:arginine-tRNA ligase activity"/>
    <property type="evidence" value="ECO:0007669"/>
    <property type="project" value="InterPro"/>
</dbReference>
<dbReference type="GO" id="GO:0005524">
    <property type="term" value="F:ATP binding"/>
    <property type="evidence" value="ECO:0007669"/>
    <property type="project" value="UniProtKB-UniRule"/>
</dbReference>
<dbReference type="GO" id="GO:0004820">
    <property type="term" value="F:glycine-tRNA ligase activity"/>
    <property type="evidence" value="ECO:0007669"/>
    <property type="project" value="UniProtKB-UniRule"/>
</dbReference>
<dbReference type="GO" id="GO:0006420">
    <property type="term" value="P:arginyl-tRNA aminoacylation"/>
    <property type="evidence" value="ECO:0007669"/>
    <property type="project" value="InterPro"/>
</dbReference>
<dbReference type="GO" id="GO:0006426">
    <property type="term" value="P:glycyl-tRNA aminoacylation"/>
    <property type="evidence" value="ECO:0007669"/>
    <property type="project" value="UniProtKB-UniRule"/>
</dbReference>
<dbReference type="Gene3D" id="1.10.730.10">
    <property type="entry name" value="Isoleucyl-tRNA Synthetase, Domain 1"/>
    <property type="match status" value="1"/>
</dbReference>
<dbReference type="HAMAP" id="MF_00255">
    <property type="entry name" value="Gly_tRNA_synth_beta"/>
    <property type="match status" value="1"/>
</dbReference>
<dbReference type="InterPro" id="IPR008909">
    <property type="entry name" value="DALR_anticod-bd"/>
</dbReference>
<dbReference type="InterPro" id="IPR015944">
    <property type="entry name" value="Gly-tRNA-synth_bsu"/>
</dbReference>
<dbReference type="InterPro" id="IPR006194">
    <property type="entry name" value="Gly-tRNA-synth_heterodimer"/>
</dbReference>
<dbReference type="NCBIfam" id="TIGR00211">
    <property type="entry name" value="glyS"/>
    <property type="match status" value="1"/>
</dbReference>
<dbReference type="PANTHER" id="PTHR30075:SF2">
    <property type="entry name" value="GLYCINE--TRNA LIGASE, CHLOROPLASTIC_MITOCHONDRIAL 2"/>
    <property type="match status" value="1"/>
</dbReference>
<dbReference type="PANTHER" id="PTHR30075">
    <property type="entry name" value="GLYCYL-TRNA SYNTHETASE"/>
    <property type="match status" value="1"/>
</dbReference>
<dbReference type="Pfam" id="PF05746">
    <property type="entry name" value="DALR_1"/>
    <property type="match status" value="1"/>
</dbReference>
<dbReference type="Pfam" id="PF02092">
    <property type="entry name" value="tRNA_synt_2f"/>
    <property type="match status" value="1"/>
</dbReference>
<dbReference type="PRINTS" id="PR01045">
    <property type="entry name" value="TRNASYNTHGB"/>
</dbReference>
<dbReference type="SMART" id="SM00836">
    <property type="entry name" value="DALR_1"/>
    <property type="match status" value="1"/>
</dbReference>
<dbReference type="SUPFAM" id="SSF109604">
    <property type="entry name" value="HD-domain/PDEase-like"/>
    <property type="match status" value="1"/>
</dbReference>
<dbReference type="PROSITE" id="PS50861">
    <property type="entry name" value="AA_TRNA_LIGASE_II_GLYAB"/>
    <property type="match status" value="1"/>
</dbReference>
<reference key="1">
    <citation type="submission" date="2008-02" db="EMBL/GenBank/DDBJ databases">
        <title>Complete sequence of Shewanella woodyi ATCC 51908.</title>
        <authorList>
            <consortium name="US DOE Joint Genome Institute"/>
            <person name="Copeland A."/>
            <person name="Lucas S."/>
            <person name="Lapidus A."/>
            <person name="Glavina del Rio T."/>
            <person name="Dalin E."/>
            <person name="Tice H."/>
            <person name="Bruce D."/>
            <person name="Goodwin L."/>
            <person name="Pitluck S."/>
            <person name="Sims D."/>
            <person name="Brettin T."/>
            <person name="Detter J.C."/>
            <person name="Han C."/>
            <person name="Kuske C.R."/>
            <person name="Schmutz J."/>
            <person name="Larimer F."/>
            <person name="Land M."/>
            <person name="Hauser L."/>
            <person name="Kyrpides N."/>
            <person name="Lykidis A."/>
            <person name="Zhao J.-S."/>
            <person name="Richardson P."/>
        </authorList>
    </citation>
    <scope>NUCLEOTIDE SEQUENCE [LARGE SCALE GENOMIC DNA]</scope>
    <source>
        <strain>ATCC 51908 / MS32</strain>
    </source>
</reference>
<proteinExistence type="inferred from homology"/>
<comment type="catalytic activity">
    <reaction evidence="1">
        <text>tRNA(Gly) + glycine + ATP = glycyl-tRNA(Gly) + AMP + diphosphate</text>
        <dbReference type="Rhea" id="RHEA:16013"/>
        <dbReference type="Rhea" id="RHEA-COMP:9664"/>
        <dbReference type="Rhea" id="RHEA-COMP:9683"/>
        <dbReference type="ChEBI" id="CHEBI:30616"/>
        <dbReference type="ChEBI" id="CHEBI:33019"/>
        <dbReference type="ChEBI" id="CHEBI:57305"/>
        <dbReference type="ChEBI" id="CHEBI:78442"/>
        <dbReference type="ChEBI" id="CHEBI:78522"/>
        <dbReference type="ChEBI" id="CHEBI:456215"/>
        <dbReference type="EC" id="6.1.1.14"/>
    </reaction>
</comment>
<comment type="subunit">
    <text evidence="1">Tetramer of two alpha and two beta subunits.</text>
</comment>
<comment type="subcellular location">
    <subcellularLocation>
        <location evidence="1">Cytoplasm</location>
    </subcellularLocation>
</comment>
<comment type="similarity">
    <text evidence="1">Belongs to the class-II aminoacyl-tRNA synthetase family.</text>
</comment>
<feature type="chain" id="PRO_1000101339" description="Glycine--tRNA ligase beta subunit">
    <location>
        <begin position="1"/>
        <end position="689"/>
    </location>
</feature>
<evidence type="ECO:0000255" key="1">
    <source>
        <dbReference type="HAMAP-Rule" id="MF_00255"/>
    </source>
</evidence>
<sequence>MNYENLLIEVGTEELPPKALRKLAESFVSNFTDELEKAELSFESAQWHAAPRRLAFTVNQLVLAQADKVVEKRGPAIAQAFDADGNPTKAAMGWARGNGISVEQAERLKTDKGEWLLHQAKVVGVETKSLINDMAQRALDKLPIPKPMRWGTSKTQFIRPVHTVTMLLGSELVEGELLGVKSARVIRGHRFMGKKSFELDHADNYLSALKEQGMVLADYEARKAIIKTDAEAAAAKIGGVADLEDDLLEEVTSLVEWPVVLTANFEEKFLDVPAEALVYTMKGDQKYFPVFDKAGQLLPHFIFVTNIESKDPQVIISGNEKVVRPRLADAEFFFETDKKQTLESRLASLETVVFQKQLGTIKQRVERISQLAGYIAASIDADSDEASRAGLLSKSDLMTNMVMEFTDLQGTMGMHYARLNGETEAVAVALAEQYKPKFSGDTVPTAPISVCVALAEKLDTLVGIFGIGQAPKGAADPFALRRAAIGVLRICLENNLPLDLVDLIAKAQELHGDNLTNDKAAEQVLEFFMGRFRAWYQDQGVSVDVILAVLARRPTAPADFDSRIKAVAHFRSLEQASALAAANKRVSNILAKVEGELATDISSELLVENAEKALAEKLNELQPQLAPLFAAANYQQALSLLADLRESVDTFFEDVMVMADDEALKNNRLALLSSLREQFLHAADISLLQ</sequence>
<organism>
    <name type="scientific">Shewanella woodyi (strain ATCC 51908 / MS32)</name>
    <dbReference type="NCBI Taxonomy" id="392500"/>
    <lineage>
        <taxon>Bacteria</taxon>
        <taxon>Pseudomonadati</taxon>
        <taxon>Pseudomonadota</taxon>
        <taxon>Gammaproteobacteria</taxon>
        <taxon>Alteromonadales</taxon>
        <taxon>Shewanellaceae</taxon>
        <taxon>Shewanella</taxon>
    </lineage>
</organism>
<keyword id="KW-0030">Aminoacyl-tRNA synthetase</keyword>
<keyword id="KW-0067">ATP-binding</keyword>
<keyword id="KW-0963">Cytoplasm</keyword>
<keyword id="KW-0436">Ligase</keyword>
<keyword id="KW-0547">Nucleotide-binding</keyword>
<keyword id="KW-0648">Protein biosynthesis</keyword>
<keyword id="KW-1185">Reference proteome</keyword>
<protein>
    <recommendedName>
        <fullName evidence="1">Glycine--tRNA ligase beta subunit</fullName>
        <ecNumber evidence="1">6.1.1.14</ecNumber>
    </recommendedName>
    <alternativeName>
        <fullName evidence="1">Glycyl-tRNA synthetase beta subunit</fullName>
        <shortName evidence="1">GlyRS</shortName>
    </alternativeName>
</protein>
<accession>B1KCY4</accession>
<gene>
    <name evidence="1" type="primary">glyS</name>
    <name type="ordered locus">Swoo_0012</name>
</gene>
<name>SYGB_SHEWM</name>